<gene>
    <name type="primary">Sftpa1</name>
    <name type="synonym">Sftp-1</name>
    <name type="synonym">Sftp1</name>
    <name type="synonym">Sftpa</name>
</gene>
<accession>P35242</accession>
<organism>
    <name type="scientific">Mus musculus</name>
    <name type="common">Mouse</name>
    <dbReference type="NCBI Taxonomy" id="10090"/>
    <lineage>
        <taxon>Eukaryota</taxon>
        <taxon>Metazoa</taxon>
        <taxon>Chordata</taxon>
        <taxon>Craniata</taxon>
        <taxon>Vertebrata</taxon>
        <taxon>Euteleostomi</taxon>
        <taxon>Mammalia</taxon>
        <taxon>Eutheria</taxon>
        <taxon>Euarchontoglires</taxon>
        <taxon>Glires</taxon>
        <taxon>Rodentia</taxon>
        <taxon>Myomorpha</taxon>
        <taxon>Muroidea</taxon>
        <taxon>Muridae</taxon>
        <taxon>Murinae</taxon>
        <taxon>Mus</taxon>
        <taxon>Mus</taxon>
    </lineage>
</organism>
<sequence length="248" mass="26157">MSLGSLAFTLFLTVVAGIKCNGTEVCAGSPGIPGTPGNHGLPGRDGRDGIKGDPGPPGPMGPPGGMPGLPGRDGLPGAPGAPGEHGDKGEPGERGLPGFPAYLDEELQTASYEIKHQILQTMGVLSLQGSMLSVGDKVFSTNGQSVNFDTIREMCTRAGGHIAAPRNPEENEAIASITKKYNTYPYLGVIEGQTPGDFHYLDGASVNYTNWYPGEPRGRGKEKCVEMYTDGKWNDKGCLQYRLAICEF</sequence>
<proteinExistence type="evidence at protein level"/>
<reference key="1">
    <citation type="journal article" date="1992" name="Am. J. Physiol.">
        <title>Murine pulmonary surfactant SP-A gene: cloning, sequence, and transcriptional activity.</title>
        <authorList>
            <person name="Korfhagen T.R."/>
            <person name="Bruno M.D."/>
            <person name="Glasser S.W."/>
            <person name="Ciraolo P.J."/>
            <person name="Whitsett J.A."/>
            <person name="Lattier D.L."/>
            <person name="Wikenheiser K.A."/>
            <person name="Clark J.C."/>
        </authorList>
    </citation>
    <scope>NUCLEOTIDE SEQUENCE [GENOMIC DNA]</scope>
    <source>
        <strain>DBA/2J</strain>
    </source>
</reference>
<reference key="2">
    <citation type="journal article" date="2010" name="Cell">
        <title>A tissue-specific atlas of mouse protein phosphorylation and expression.</title>
        <authorList>
            <person name="Huttlin E.L."/>
            <person name="Jedrychowski M.P."/>
            <person name="Elias J.E."/>
            <person name="Goswami T."/>
            <person name="Rad R."/>
            <person name="Beausoleil S.A."/>
            <person name="Villen J."/>
            <person name="Haas W."/>
            <person name="Sowa M.E."/>
            <person name="Gygi S.P."/>
        </authorList>
    </citation>
    <scope>IDENTIFICATION BY MASS SPECTROMETRY [LARGE SCALE ANALYSIS]</scope>
    <source>
        <tissue>Lung</tissue>
    </source>
</reference>
<reference key="3">
    <citation type="journal article" date="2015" name="PLoS ONE">
        <title>SP-R210 (Myo18A) isoforms as intrinsic modulators of macrophage priming and activation.</title>
        <authorList>
            <person name="Yang L."/>
            <person name="Carrillo M."/>
            <person name="Wu Y.M."/>
            <person name="DiAngelo S.L."/>
            <person name="Silveyra P."/>
            <person name="Umstead T.M."/>
            <person name="Halstead E.S."/>
            <person name="Davies M.L."/>
            <person name="Hu S."/>
            <person name="Floros J."/>
            <person name="McCormack F.X."/>
            <person name="Christensen N.D."/>
            <person name="Chroneos Z.C."/>
        </authorList>
    </citation>
    <scope>FUNCTION</scope>
</reference>
<reference key="4">
    <citation type="journal article" date="2019" name="J. Exp. Med.">
        <title>A homozygous SFTPA1 mutation drives necroptosis of type II alveolar epithelial cells in patients with idiopathic pulmonary fibrosis.</title>
        <authorList>
            <person name="Takezaki A."/>
            <person name="Tsukumo S.I."/>
            <person name="Setoguchi Y."/>
            <person name="Ledford J.G."/>
            <person name="Goto H."/>
            <person name="Hosomichi K."/>
            <person name="Uehara H."/>
            <person name="Nishioka Y."/>
            <person name="Yasutomo K."/>
        </authorList>
    </citation>
    <scope>MUTAGENESIS OF TYR-208</scope>
    <scope>SUBCELLULAR LOCATION</scope>
</reference>
<protein>
    <recommendedName>
        <fullName>Pulmonary surfactant-associated protein A</fullName>
        <shortName>PSAP</shortName>
        <shortName>PSP-A</shortName>
        <shortName>SP-A</shortName>
    </recommendedName>
</protein>
<comment type="function">
    <text evidence="6">In presence of calcium ions, it binds to surfactant phospholipids and contributes to lower the surface tension at the air-liquid interface in the alveoli of the mammalian lung and is essential for normal respiration. Enhances the expression of MYO18A/SP-R210 on alveolar macrophages (PubMed:25965346).</text>
</comment>
<comment type="subunit">
    <text evidence="2">Oligomeric complex of 6 set of homotrimers.</text>
</comment>
<comment type="subcellular location">
    <subcellularLocation>
        <location evidence="7">Secreted</location>
    </subcellularLocation>
    <subcellularLocation>
        <location evidence="8">Secreted</location>
        <location evidence="8">Extracellular space</location>
        <location evidence="8">Extracellular matrix</location>
    </subcellularLocation>
    <subcellularLocation>
        <location evidence="8">Secreted</location>
        <location evidence="8">Extracellular space</location>
        <location evidence="8">Surface film</location>
    </subcellularLocation>
</comment>
<comment type="miscellaneous">
    <text>Pulmonary surfactant consists of 90% lipid and 10% protein. There are 4 surfactant-associated proteins: 2 collagenous, carbohydrate-binding glycoproteins (SP-A and SP-D) and 2 small hydrophobic proteins (SP-B and SP-C).</text>
</comment>
<comment type="similarity">
    <text evidence="8">Belongs to the SFTPA family.</text>
</comment>
<comment type="online information" name="Functional Glycomics Gateway - Glycan Binding">
    <link uri="http://www.functionalglycomics.org/glycomics/GBPServlet?&amp;operationType=view&amp;cbpId=cbp_mou_Ctlect_355"/>
    <text>Pulmonary surfactant protein SP-A</text>
</comment>
<name>SFTPA_MOUSE</name>
<keyword id="KW-0106">Calcium</keyword>
<keyword id="KW-0176">Collagen</keyword>
<keyword id="KW-1015">Disulfide bond</keyword>
<keyword id="KW-0272">Extracellular matrix</keyword>
<keyword id="KW-0305">Gaseous exchange</keyword>
<keyword id="KW-0325">Glycoprotein</keyword>
<keyword id="KW-0379">Hydroxylation</keyword>
<keyword id="KW-0430">Lectin</keyword>
<keyword id="KW-0479">Metal-binding</keyword>
<keyword id="KW-1185">Reference proteome</keyword>
<keyword id="KW-0677">Repeat</keyword>
<keyword id="KW-0964">Secreted</keyword>
<keyword id="KW-0732">Signal</keyword>
<keyword id="KW-0767">Surface film</keyword>
<evidence type="ECO:0000250" key="1"/>
<evidence type="ECO:0000250" key="2">
    <source>
        <dbReference type="UniProtKB" id="Q8IWL2"/>
    </source>
</evidence>
<evidence type="ECO:0000255" key="3"/>
<evidence type="ECO:0000255" key="4">
    <source>
        <dbReference type="PROSITE-ProRule" id="PRU00040"/>
    </source>
</evidence>
<evidence type="ECO:0000256" key="5">
    <source>
        <dbReference type="SAM" id="MobiDB-lite"/>
    </source>
</evidence>
<evidence type="ECO:0000269" key="6">
    <source>
    </source>
</evidence>
<evidence type="ECO:0000269" key="7">
    <source>
    </source>
</evidence>
<evidence type="ECO:0000305" key="8"/>
<dbReference type="EMBL" id="S48768">
    <property type="protein sequence ID" value="AAB24274.1"/>
    <property type="molecule type" value="Genomic_DNA"/>
</dbReference>
<dbReference type="CCDS" id="CCDS26960.1"/>
<dbReference type="PIR" id="A48853">
    <property type="entry name" value="A48853"/>
</dbReference>
<dbReference type="SMR" id="P35242"/>
<dbReference type="FunCoup" id="P35242">
    <property type="interactions" value="95"/>
</dbReference>
<dbReference type="IntAct" id="P35242">
    <property type="interactions" value="7"/>
</dbReference>
<dbReference type="MINT" id="P35242"/>
<dbReference type="STRING" id="10090.ENSMUSP00000129696"/>
<dbReference type="GlyCosmos" id="P35242">
    <property type="glycosylation" value="2 sites, No reported glycans"/>
</dbReference>
<dbReference type="GlyGen" id="P35242">
    <property type="glycosylation" value="3 sites"/>
</dbReference>
<dbReference type="iPTMnet" id="P35242"/>
<dbReference type="PhosphoSitePlus" id="P35242"/>
<dbReference type="PaxDb" id="10090-ENSMUSP00000129696"/>
<dbReference type="PeptideAtlas" id="P35242"/>
<dbReference type="ProteomicsDB" id="257211"/>
<dbReference type="AGR" id="MGI:109518"/>
<dbReference type="MGI" id="MGI:109518">
    <property type="gene designation" value="Sftpa1"/>
</dbReference>
<dbReference type="eggNOG" id="KOG4297">
    <property type="taxonomic scope" value="Eukaryota"/>
</dbReference>
<dbReference type="InParanoid" id="P35242"/>
<dbReference type="OrthoDB" id="7357196at2759"/>
<dbReference type="PhylomeDB" id="P35242"/>
<dbReference type="Reactome" id="R-MMU-166016">
    <property type="pathway name" value="Toll Like Receptor 4 (TLR4) Cascade"/>
</dbReference>
<dbReference type="Reactome" id="R-MMU-391160">
    <property type="pathway name" value="Signal regulatory protein family interactions"/>
</dbReference>
<dbReference type="Reactome" id="R-MMU-5683826">
    <property type="pathway name" value="Surfactant metabolism"/>
</dbReference>
<dbReference type="Reactome" id="R-MMU-5686938">
    <property type="pathway name" value="Regulation of TLR by endogenous ligand"/>
</dbReference>
<dbReference type="PRO" id="PR:P35242"/>
<dbReference type="Proteomes" id="UP000000589">
    <property type="component" value="Unplaced"/>
</dbReference>
<dbReference type="RNAct" id="P35242">
    <property type="molecule type" value="protein"/>
</dbReference>
<dbReference type="GO" id="GO:0005581">
    <property type="term" value="C:collagen trimer"/>
    <property type="evidence" value="ECO:0007669"/>
    <property type="project" value="UniProtKB-KW"/>
</dbReference>
<dbReference type="GO" id="GO:0062023">
    <property type="term" value="C:collagen-containing extracellular matrix"/>
    <property type="evidence" value="ECO:0007005"/>
    <property type="project" value="BHF-UCL"/>
</dbReference>
<dbReference type="GO" id="GO:0005576">
    <property type="term" value="C:extracellular region"/>
    <property type="evidence" value="ECO:0007669"/>
    <property type="project" value="UniProtKB-SubCell"/>
</dbReference>
<dbReference type="GO" id="GO:0030246">
    <property type="term" value="F:carbohydrate binding"/>
    <property type="evidence" value="ECO:0007669"/>
    <property type="project" value="UniProtKB-KW"/>
</dbReference>
<dbReference type="GO" id="GO:0046872">
    <property type="term" value="F:metal ion binding"/>
    <property type="evidence" value="ECO:0007669"/>
    <property type="project" value="UniProtKB-KW"/>
</dbReference>
<dbReference type="GO" id="GO:0007585">
    <property type="term" value="P:respiratory gaseous exchange by respiratory system"/>
    <property type="evidence" value="ECO:0007669"/>
    <property type="project" value="UniProtKB-KW"/>
</dbReference>
<dbReference type="CDD" id="cd03591">
    <property type="entry name" value="CLECT_collectin_like"/>
    <property type="match status" value="1"/>
</dbReference>
<dbReference type="FunFam" id="3.10.100.10:FF:000056">
    <property type="entry name" value="Pulmonary surfactant-associated protein A"/>
    <property type="match status" value="1"/>
</dbReference>
<dbReference type="Gene3D" id="3.10.100.10">
    <property type="entry name" value="Mannose-Binding Protein A, subunit A"/>
    <property type="match status" value="1"/>
</dbReference>
<dbReference type="InterPro" id="IPR001304">
    <property type="entry name" value="C-type_lectin-like"/>
</dbReference>
<dbReference type="InterPro" id="IPR016186">
    <property type="entry name" value="C-type_lectin-like/link_sf"/>
</dbReference>
<dbReference type="InterPro" id="IPR018378">
    <property type="entry name" value="C-type_lectin_CS"/>
</dbReference>
<dbReference type="InterPro" id="IPR051663">
    <property type="entry name" value="CLec_Tetranectin-domain"/>
</dbReference>
<dbReference type="InterPro" id="IPR033990">
    <property type="entry name" value="Collectin_CTLD"/>
</dbReference>
<dbReference type="InterPro" id="IPR016187">
    <property type="entry name" value="CTDL_fold"/>
</dbReference>
<dbReference type="PANTHER" id="PTHR22799:SF1">
    <property type="entry name" value="C-TYPE LECTIN DOMAIN FAMILY 11 MEMBER A"/>
    <property type="match status" value="1"/>
</dbReference>
<dbReference type="PANTHER" id="PTHR22799">
    <property type="entry name" value="TETRANECTIN-RELATED"/>
    <property type="match status" value="1"/>
</dbReference>
<dbReference type="Pfam" id="PF00059">
    <property type="entry name" value="Lectin_C"/>
    <property type="match status" value="1"/>
</dbReference>
<dbReference type="SMART" id="SM00034">
    <property type="entry name" value="CLECT"/>
    <property type="match status" value="1"/>
</dbReference>
<dbReference type="SUPFAM" id="SSF56436">
    <property type="entry name" value="C-type lectin-like"/>
    <property type="match status" value="1"/>
</dbReference>
<dbReference type="SUPFAM" id="SSF57944">
    <property type="entry name" value="Triple coiled coil domain of C-type lectins"/>
    <property type="match status" value="1"/>
</dbReference>
<dbReference type="PROSITE" id="PS00615">
    <property type="entry name" value="C_TYPE_LECTIN_1"/>
    <property type="match status" value="1"/>
</dbReference>
<dbReference type="PROSITE" id="PS50041">
    <property type="entry name" value="C_TYPE_LECTIN_2"/>
    <property type="match status" value="1"/>
</dbReference>
<feature type="signal peptide" evidence="1">
    <location>
        <begin position="1"/>
        <end position="20"/>
    </location>
</feature>
<feature type="chain" id="PRO_0000017459" description="Pulmonary surfactant-associated protein A">
    <location>
        <begin position="21"/>
        <end position="248"/>
    </location>
</feature>
<feature type="domain" description="Collagen-like">
    <location>
        <begin position="28"/>
        <end position="100"/>
    </location>
</feature>
<feature type="domain" description="C-type lectin" evidence="4">
    <location>
        <begin position="132"/>
        <end position="248"/>
    </location>
</feature>
<feature type="region of interest" description="Disordered" evidence="5">
    <location>
        <begin position="28"/>
        <end position="100"/>
    </location>
</feature>
<feature type="compositionally biased region" description="Basic and acidic residues" evidence="5">
    <location>
        <begin position="42"/>
        <end position="51"/>
    </location>
</feature>
<feature type="compositionally biased region" description="Pro residues" evidence="5">
    <location>
        <begin position="54"/>
        <end position="65"/>
    </location>
</feature>
<feature type="compositionally biased region" description="Low complexity" evidence="5">
    <location>
        <begin position="69"/>
        <end position="82"/>
    </location>
</feature>
<feature type="compositionally biased region" description="Basic and acidic residues" evidence="5">
    <location>
        <begin position="84"/>
        <end position="93"/>
    </location>
</feature>
<feature type="binding site" evidence="1">
    <location>
        <position position="215"/>
    </location>
    <ligand>
        <name>Ca(2+)</name>
        <dbReference type="ChEBI" id="CHEBI:29108"/>
    </ligand>
</feature>
<feature type="binding site" evidence="1">
    <location>
        <position position="217"/>
    </location>
    <ligand>
        <name>Ca(2+)</name>
        <dbReference type="ChEBI" id="CHEBI:29108"/>
    </ligand>
</feature>
<feature type="binding site" evidence="1">
    <location>
        <position position="234"/>
    </location>
    <ligand>
        <name>Ca(2+)</name>
        <dbReference type="ChEBI" id="CHEBI:29108"/>
    </ligand>
</feature>
<feature type="binding site" evidence="1">
    <location>
        <position position="235"/>
    </location>
    <ligand>
        <name>Ca(2+)</name>
        <dbReference type="ChEBI" id="CHEBI:29108"/>
    </ligand>
</feature>
<feature type="modified residue" description="4-hydroxyproline" evidence="1">
    <location>
        <position position="30"/>
    </location>
</feature>
<feature type="modified residue" description="4-hydroxyproline" evidence="1">
    <location>
        <position position="33"/>
    </location>
</feature>
<feature type="modified residue" description="4-hydroxyproline" evidence="1">
    <location>
        <position position="36"/>
    </location>
</feature>
<feature type="modified residue" description="4-hydroxyproline" evidence="1">
    <location>
        <position position="42"/>
    </location>
</feature>
<feature type="modified residue" description="4-hydroxyproline" evidence="1">
    <location>
        <position position="54"/>
    </location>
</feature>
<feature type="modified residue" description="4-hydroxyproline" evidence="1">
    <location>
        <position position="57"/>
    </location>
</feature>
<feature type="modified residue" description="4-hydroxyproline" evidence="1">
    <location>
        <position position="63"/>
    </location>
</feature>
<feature type="modified residue" description="4-hydroxyproline" evidence="1">
    <location>
        <position position="67"/>
    </location>
</feature>
<feature type="modified residue" description="4-hydroxyproline" evidence="1">
    <location>
        <position position="70"/>
    </location>
</feature>
<feature type="modified residue" description="4-hydroxyproline" evidence="1">
    <location>
        <position position="76"/>
    </location>
</feature>
<feature type="glycosylation site" description="N-linked (GlcNAc...) asparagine" evidence="3">
    <location>
        <position position="21"/>
    </location>
</feature>
<feature type="glycosylation site" description="N-linked (GlcNAc...) asparagine" evidence="8">
    <location>
        <position position="207"/>
    </location>
</feature>
<feature type="disulfide bond" description="Interchain" evidence="4">
    <location>
        <position position="26"/>
    </location>
</feature>
<feature type="disulfide bond" evidence="4">
    <location>
        <begin position="155"/>
        <end position="246"/>
    </location>
</feature>
<feature type="disulfide bond" evidence="4">
    <location>
        <begin position="224"/>
        <end position="238"/>
    </location>
</feature>
<feature type="mutagenesis site" description="Knockin homozygous mice develop progressive pulmonary fibrosis. The mutant protein is not secreted in bronchoalveolar fluid from mutant mice." evidence="7">
    <original>Y</original>
    <variation>H</variation>
    <location>
        <position position="208"/>
    </location>
</feature>